<gene>
    <name type="primary">RALB</name>
</gene>
<proteinExistence type="evidence at protein level"/>
<comment type="function">
    <text evidence="2 4 6 7">Multifunctional GTPase involved in a variety of cellular processes including gene expression, cell migration, cell proliferation, oncogenic transformation and membrane trafficking (PubMed:10393179, PubMed:17875936, PubMed:18756269). Accomplishes its multiple functions by interacting with distinct downstream effectors. Acts as a GTP sensor for GTP-dependent exocytosis of dense core vesicles (By similarity). Required both to stabilize the assembly of the exocyst complex and to localize functional exocyst complexes to the leading edge of migrating cells (By similarity). Required for suppression of apoptosis (PubMed:17875936). In late stages of cytokinesis, upon completion of the bridge formation between dividing cells, mediates exocyst recruitment to the midbody to drive abscission (PubMed:18756269). Involved in ligand-dependent receptor mediated endocytosis of the EGF and insulin receptors (PubMed:10393179).</text>
</comment>
<comment type="catalytic activity">
    <reaction evidence="12">
        <text>GTP + H2O = GDP + phosphate + H(+)</text>
        <dbReference type="Rhea" id="RHEA:19669"/>
        <dbReference type="ChEBI" id="CHEBI:15377"/>
        <dbReference type="ChEBI" id="CHEBI:15378"/>
        <dbReference type="ChEBI" id="CHEBI:37565"/>
        <dbReference type="ChEBI" id="CHEBI:43474"/>
        <dbReference type="ChEBI" id="CHEBI:58189"/>
        <dbReference type="EC" id="3.6.5.2"/>
    </reaction>
</comment>
<comment type="activity regulation">
    <text>Alternates between an inactive form bound to GDP and an active form bound to GTP. Activated by a guanine nucleotide-exchange factor (GEF) and inactivated by a GTPase-activating protein (GAP).</text>
</comment>
<comment type="subunit">
    <text evidence="5 7 8 9 10">Interacts with EXOC2/Sec5 and EXOC8/Exo84 (PubMed:14525976, PubMed:18756269, PubMed:19166349). Interacts (via effector domain) with RALBP1 (PubMed:20696399, PubMed:7673236).</text>
</comment>
<comment type="interaction">
    <interactant intactId="EBI-752162">
        <id>P11234</id>
    </interactant>
    <interactant intactId="EBI-6509505">
        <id>Q0VD86</id>
        <label>INCA1</label>
    </interactant>
    <organismsDiffer>false</organismsDiffer>
    <experiments>3</experiments>
</comment>
<comment type="subcellular location">
    <subcellularLocation>
        <location evidence="6">Cell membrane</location>
        <topology evidence="6">Lipid-anchor</topology>
        <orientation evidence="6">Cytoplasmic side</orientation>
    </subcellularLocation>
    <subcellularLocation>
        <location evidence="7">Midbody</location>
    </subcellularLocation>
    <text evidence="7">During late cytokinesis, enriched at the midbody.</text>
</comment>
<comment type="alternative products">
    <event type="alternative splicing"/>
    <isoform>
        <id>P11234-1</id>
        <name>1</name>
        <sequence type="displayed"/>
    </isoform>
    <isoform>
        <id>P11234-2</id>
        <name>2</name>
        <sequence type="described" ref="VSP_055843"/>
    </isoform>
    <isoform>
        <id>P11234-3</id>
        <name>3</name>
        <sequence type="described" ref="VSP_055844"/>
    </isoform>
</comment>
<comment type="PTM">
    <text evidence="6">Prenylation is essential for membrane localization. The geranylgeranylated form and the farnesylated mutant does not undergo alternative prenylation in response to geranylgeranyltransferase I inhibitors (GGTIs) and farnesyltransferase I inhibitors (FTIs).</text>
</comment>
<comment type="PTM">
    <text evidence="6">The farnesylated form confers resistance to the proapoptotic and anti-anchorage-dependent growth effects of geranylgeranyltransferase I inhibitors, including GGTI-2417.</text>
</comment>
<comment type="similarity">
    <text evidence="12">Belongs to the small GTPase superfamily. Ras family.</text>
</comment>
<sequence length="206" mass="23409">MAANKSKGQSSLALHKVIMVGSGGVGKSALTLQFMYDEFVEDYEPTKADSYRKKVVLDGEEVQIDILDTAGQEDYAAIRDNYFRSGEGFLLVFSITEHESFTATAEFREQILRVKAEEDKIPLLVVGNKSDLEERRQVPVEEARSKAEEWGVQYVETSAKTRANVDKVFFDLMREIRTKKMSENKDKNGKKSSKNKKSFKERCCLL</sequence>
<reference key="1">
    <citation type="journal article" date="1989" name="Nucleic Acids Res.">
        <title>Coding sequences of human ralA and ralB cDNAs.</title>
        <authorList>
            <person name="Chardin P."/>
            <person name="Tavitian A."/>
        </authorList>
    </citation>
    <scope>NUCLEOTIDE SEQUENCE [MRNA] (ISOFORM 1)</scope>
</reference>
<reference key="2">
    <citation type="journal article" date="1990" name="Somat. Cell Mol. Genet.">
        <title>Chromosomal localization and cDNA sequence of human ralB, a GTP binding protein.</title>
        <authorList>
            <person name="Hsieh C.-L."/>
            <person name="Swaroop A."/>
            <person name="Francke U."/>
        </authorList>
    </citation>
    <scope>NUCLEOTIDE SEQUENCE [MRNA] (ISOFORM 1)</scope>
    <source>
        <tissue>Retina</tissue>
    </source>
</reference>
<reference key="3">
    <citation type="submission" date="2002-03" db="EMBL/GenBank/DDBJ databases">
        <title>cDNA clones of human proteins involved in signal transduction sequenced by the Guthrie cDNA resource center (www.cdna.org).</title>
        <authorList>
            <person name="Puhl H.L. III"/>
            <person name="Ikeda S.R."/>
            <person name="Aronstam R.S."/>
        </authorList>
    </citation>
    <scope>NUCLEOTIDE SEQUENCE [LARGE SCALE MRNA] (ISOFORM 1)</scope>
    <source>
        <tissue>Brain</tissue>
    </source>
</reference>
<reference key="4">
    <citation type="submission" date="2003-05" db="EMBL/GenBank/DDBJ databases">
        <title>Cloning of human full-length CDSs in BD Creator(TM) system donor vector.</title>
        <authorList>
            <person name="Kalnine N."/>
            <person name="Chen X."/>
            <person name="Rolfs A."/>
            <person name="Halleck A."/>
            <person name="Hines L."/>
            <person name="Eisenstein S."/>
            <person name="Koundinya M."/>
            <person name="Raphael J."/>
            <person name="Moreira D."/>
            <person name="Kelley T."/>
            <person name="LaBaer J."/>
            <person name="Lin Y."/>
            <person name="Phelan M."/>
            <person name="Farmer A."/>
        </authorList>
    </citation>
    <scope>NUCLEOTIDE SEQUENCE [LARGE SCALE MRNA] (ISOFORM 1)</scope>
</reference>
<reference key="5">
    <citation type="journal article" date="2004" name="Nat. Genet.">
        <title>Complete sequencing and characterization of 21,243 full-length human cDNAs.</title>
        <authorList>
            <person name="Ota T."/>
            <person name="Suzuki Y."/>
            <person name="Nishikawa T."/>
            <person name="Otsuki T."/>
            <person name="Sugiyama T."/>
            <person name="Irie R."/>
            <person name="Wakamatsu A."/>
            <person name="Hayashi K."/>
            <person name="Sato H."/>
            <person name="Nagai K."/>
            <person name="Kimura K."/>
            <person name="Makita H."/>
            <person name="Sekine M."/>
            <person name="Obayashi M."/>
            <person name="Nishi T."/>
            <person name="Shibahara T."/>
            <person name="Tanaka T."/>
            <person name="Ishii S."/>
            <person name="Yamamoto J."/>
            <person name="Saito K."/>
            <person name="Kawai Y."/>
            <person name="Isono Y."/>
            <person name="Nakamura Y."/>
            <person name="Nagahari K."/>
            <person name="Murakami K."/>
            <person name="Yasuda T."/>
            <person name="Iwayanagi T."/>
            <person name="Wagatsuma M."/>
            <person name="Shiratori A."/>
            <person name="Sudo H."/>
            <person name="Hosoiri T."/>
            <person name="Kaku Y."/>
            <person name="Kodaira H."/>
            <person name="Kondo H."/>
            <person name="Sugawara M."/>
            <person name="Takahashi M."/>
            <person name="Kanda K."/>
            <person name="Yokoi T."/>
            <person name="Furuya T."/>
            <person name="Kikkawa E."/>
            <person name="Omura Y."/>
            <person name="Abe K."/>
            <person name="Kamihara K."/>
            <person name="Katsuta N."/>
            <person name="Sato K."/>
            <person name="Tanikawa M."/>
            <person name="Yamazaki M."/>
            <person name="Ninomiya K."/>
            <person name="Ishibashi T."/>
            <person name="Yamashita H."/>
            <person name="Murakawa K."/>
            <person name="Fujimori K."/>
            <person name="Tanai H."/>
            <person name="Kimata M."/>
            <person name="Watanabe M."/>
            <person name="Hiraoka S."/>
            <person name="Chiba Y."/>
            <person name="Ishida S."/>
            <person name="Ono Y."/>
            <person name="Takiguchi S."/>
            <person name="Watanabe S."/>
            <person name="Yosida M."/>
            <person name="Hotuta T."/>
            <person name="Kusano J."/>
            <person name="Kanehori K."/>
            <person name="Takahashi-Fujii A."/>
            <person name="Hara H."/>
            <person name="Tanase T.-O."/>
            <person name="Nomura Y."/>
            <person name="Togiya S."/>
            <person name="Komai F."/>
            <person name="Hara R."/>
            <person name="Takeuchi K."/>
            <person name="Arita M."/>
            <person name="Imose N."/>
            <person name="Musashino K."/>
            <person name="Yuuki H."/>
            <person name="Oshima A."/>
            <person name="Sasaki N."/>
            <person name="Aotsuka S."/>
            <person name="Yoshikawa Y."/>
            <person name="Matsunawa H."/>
            <person name="Ichihara T."/>
            <person name="Shiohata N."/>
            <person name="Sano S."/>
            <person name="Moriya S."/>
            <person name="Momiyama H."/>
            <person name="Satoh N."/>
            <person name="Takami S."/>
            <person name="Terashima Y."/>
            <person name="Suzuki O."/>
            <person name="Nakagawa S."/>
            <person name="Senoh A."/>
            <person name="Mizoguchi H."/>
            <person name="Goto Y."/>
            <person name="Shimizu F."/>
            <person name="Wakebe H."/>
            <person name="Hishigaki H."/>
            <person name="Watanabe T."/>
            <person name="Sugiyama A."/>
            <person name="Takemoto M."/>
            <person name="Kawakami B."/>
            <person name="Yamazaki M."/>
            <person name="Watanabe K."/>
            <person name="Kumagai A."/>
            <person name="Itakura S."/>
            <person name="Fukuzumi Y."/>
            <person name="Fujimori Y."/>
            <person name="Komiyama M."/>
            <person name="Tashiro H."/>
            <person name="Tanigami A."/>
            <person name="Fujiwara T."/>
            <person name="Ono T."/>
            <person name="Yamada K."/>
            <person name="Fujii Y."/>
            <person name="Ozaki K."/>
            <person name="Hirao M."/>
            <person name="Ohmori Y."/>
            <person name="Kawabata A."/>
            <person name="Hikiji T."/>
            <person name="Kobatake N."/>
            <person name="Inagaki H."/>
            <person name="Ikema Y."/>
            <person name="Okamoto S."/>
            <person name="Okitani R."/>
            <person name="Kawakami T."/>
            <person name="Noguchi S."/>
            <person name="Itoh T."/>
            <person name="Shigeta K."/>
            <person name="Senba T."/>
            <person name="Matsumura K."/>
            <person name="Nakajima Y."/>
            <person name="Mizuno T."/>
            <person name="Morinaga M."/>
            <person name="Sasaki M."/>
            <person name="Togashi T."/>
            <person name="Oyama M."/>
            <person name="Hata H."/>
            <person name="Watanabe M."/>
            <person name="Komatsu T."/>
            <person name="Mizushima-Sugano J."/>
            <person name="Satoh T."/>
            <person name="Shirai Y."/>
            <person name="Takahashi Y."/>
            <person name="Nakagawa K."/>
            <person name="Okumura K."/>
            <person name="Nagase T."/>
            <person name="Nomura N."/>
            <person name="Kikuchi H."/>
            <person name="Masuho Y."/>
            <person name="Yamashita R."/>
            <person name="Nakai K."/>
            <person name="Yada T."/>
            <person name="Nakamura Y."/>
            <person name="Ohara O."/>
            <person name="Isogai T."/>
            <person name="Sugano S."/>
        </authorList>
    </citation>
    <scope>NUCLEOTIDE SEQUENCE [LARGE SCALE MRNA] (ISOFORMS 1; 2 AND 3)</scope>
    <source>
        <tissue>Caudate nucleus</tissue>
        <tissue>Thymus</tissue>
    </source>
</reference>
<reference key="6">
    <citation type="journal article" date="2005" name="Nature">
        <title>Generation and annotation of the DNA sequences of human chromosomes 2 and 4.</title>
        <authorList>
            <person name="Hillier L.W."/>
            <person name="Graves T.A."/>
            <person name="Fulton R.S."/>
            <person name="Fulton L.A."/>
            <person name="Pepin K.H."/>
            <person name="Minx P."/>
            <person name="Wagner-McPherson C."/>
            <person name="Layman D."/>
            <person name="Wylie K."/>
            <person name="Sekhon M."/>
            <person name="Becker M.C."/>
            <person name="Fewell G.A."/>
            <person name="Delehaunty K.D."/>
            <person name="Miner T.L."/>
            <person name="Nash W.E."/>
            <person name="Kremitzki C."/>
            <person name="Oddy L."/>
            <person name="Du H."/>
            <person name="Sun H."/>
            <person name="Bradshaw-Cordum H."/>
            <person name="Ali J."/>
            <person name="Carter J."/>
            <person name="Cordes M."/>
            <person name="Harris A."/>
            <person name="Isak A."/>
            <person name="van Brunt A."/>
            <person name="Nguyen C."/>
            <person name="Du F."/>
            <person name="Courtney L."/>
            <person name="Kalicki J."/>
            <person name="Ozersky P."/>
            <person name="Abbott S."/>
            <person name="Armstrong J."/>
            <person name="Belter E.A."/>
            <person name="Caruso L."/>
            <person name="Cedroni M."/>
            <person name="Cotton M."/>
            <person name="Davidson T."/>
            <person name="Desai A."/>
            <person name="Elliott G."/>
            <person name="Erb T."/>
            <person name="Fronick C."/>
            <person name="Gaige T."/>
            <person name="Haakenson W."/>
            <person name="Haglund K."/>
            <person name="Holmes A."/>
            <person name="Harkins R."/>
            <person name="Kim K."/>
            <person name="Kruchowski S.S."/>
            <person name="Strong C.M."/>
            <person name="Grewal N."/>
            <person name="Goyea E."/>
            <person name="Hou S."/>
            <person name="Levy A."/>
            <person name="Martinka S."/>
            <person name="Mead K."/>
            <person name="McLellan M.D."/>
            <person name="Meyer R."/>
            <person name="Randall-Maher J."/>
            <person name="Tomlinson C."/>
            <person name="Dauphin-Kohlberg S."/>
            <person name="Kozlowicz-Reilly A."/>
            <person name="Shah N."/>
            <person name="Swearengen-Shahid S."/>
            <person name="Snider J."/>
            <person name="Strong J.T."/>
            <person name="Thompson J."/>
            <person name="Yoakum M."/>
            <person name="Leonard S."/>
            <person name="Pearman C."/>
            <person name="Trani L."/>
            <person name="Radionenko M."/>
            <person name="Waligorski J.E."/>
            <person name="Wang C."/>
            <person name="Rock S.M."/>
            <person name="Tin-Wollam A.-M."/>
            <person name="Maupin R."/>
            <person name="Latreille P."/>
            <person name="Wendl M.C."/>
            <person name="Yang S.-P."/>
            <person name="Pohl C."/>
            <person name="Wallis J.W."/>
            <person name="Spieth J."/>
            <person name="Bieri T.A."/>
            <person name="Berkowicz N."/>
            <person name="Nelson J.O."/>
            <person name="Osborne J."/>
            <person name="Ding L."/>
            <person name="Meyer R."/>
            <person name="Sabo A."/>
            <person name="Shotland Y."/>
            <person name="Sinha P."/>
            <person name="Wohldmann P.E."/>
            <person name="Cook L.L."/>
            <person name="Hickenbotham M.T."/>
            <person name="Eldred J."/>
            <person name="Williams D."/>
            <person name="Jones T.A."/>
            <person name="She X."/>
            <person name="Ciccarelli F.D."/>
            <person name="Izaurralde E."/>
            <person name="Taylor J."/>
            <person name="Schmutz J."/>
            <person name="Myers R.M."/>
            <person name="Cox D.R."/>
            <person name="Huang X."/>
            <person name="McPherson J.D."/>
            <person name="Mardis E.R."/>
            <person name="Clifton S.W."/>
            <person name="Warren W.C."/>
            <person name="Chinwalla A.T."/>
            <person name="Eddy S.R."/>
            <person name="Marra M.A."/>
            <person name="Ovcharenko I."/>
            <person name="Furey T.S."/>
            <person name="Miller W."/>
            <person name="Eichler E.E."/>
            <person name="Bork P."/>
            <person name="Suyama M."/>
            <person name="Torrents D."/>
            <person name="Waterston R.H."/>
            <person name="Wilson R.K."/>
        </authorList>
    </citation>
    <scope>NUCLEOTIDE SEQUENCE [LARGE SCALE GENOMIC DNA]</scope>
</reference>
<reference key="7">
    <citation type="submission" date="2005-07" db="EMBL/GenBank/DDBJ databases">
        <authorList>
            <person name="Mural R.J."/>
            <person name="Istrail S."/>
            <person name="Sutton G."/>
            <person name="Florea L."/>
            <person name="Halpern A.L."/>
            <person name="Mobarry C.M."/>
            <person name="Lippert R."/>
            <person name="Walenz B."/>
            <person name="Shatkay H."/>
            <person name="Dew I."/>
            <person name="Miller J.R."/>
            <person name="Flanigan M.J."/>
            <person name="Edwards N.J."/>
            <person name="Bolanos R."/>
            <person name="Fasulo D."/>
            <person name="Halldorsson B.V."/>
            <person name="Hannenhalli S."/>
            <person name="Turner R."/>
            <person name="Yooseph S."/>
            <person name="Lu F."/>
            <person name="Nusskern D.R."/>
            <person name="Shue B.C."/>
            <person name="Zheng X.H."/>
            <person name="Zhong F."/>
            <person name="Delcher A.L."/>
            <person name="Huson D.H."/>
            <person name="Kravitz S.A."/>
            <person name="Mouchard L."/>
            <person name="Reinert K."/>
            <person name="Remington K.A."/>
            <person name="Clark A.G."/>
            <person name="Waterman M.S."/>
            <person name="Eichler E.E."/>
            <person name="Adams M.D."/>
            <person name="Hunkapiller M.W."/>
            <person name="Myers E.W."/>
            <person name="Venter J.C."/>
        </authorList>
    </citation>
    <scope>NUCLEOTIDE SEQUENCE [LARGE SCALE GENOMIC DNA]</scope>
</reference>
<reference key="8">
    <citation type="journal article" date="2004" name="Genome Res.">
        <title>The status, quality, and expansion of the NIH full-length cDNA project: the Mammalian Gene Collection (MGC).</title>
        <authorList>
            <consortium name="The MGC Project Team"/>
        </authorList>
    </citation>
    <scope>NUCLEOTIDE SEQUENCE [LARGE SCALE MRNA] (ISOFORM 1)</scope>
    <source>
        <tissue>Lung</tissue>
    </source>
</reference>
<reference key="9">
    <citation type="journal article" date="1995" name="J. Biol. Chem.">
        <title>Bridging Ral GTPase to Rho pathways. RLIP76, a Ral effector with CDC42/Rac GTPase-activating protein activity.</title>
        <authorList>
            <person name="Jullien-Flores V."/>
            <person name="Dorseuil O."/>
            <person name="Romero F."/>
            <person name="Letourneur F."/>
            <person name="Saragosti S."/>
            <person name="Berger R."/>
            <person name="Tavitian A."/>
            <person name="Gacon G."/>
            <person name="Camonis J.H."/>
        </authorList>
    </citation>
    <scope>INTERACTION WITH RALBP1</scope>
</reference>
<reference key="10">
    <citation type="journal article" date="1999" name="EMBO J.">
        <title>Small G protein Ral and its downstream molecules regulate endocytosis of EGF and insulin receptors.</title>
        <authorList>
            <person name="Nakashima S."/>
            <person name="Morinaka K."/>
            <person name="Koyama S."/>
            <person name="Ikeda M."/>
            <person name="Kishida M."/>
            <person name="Okawa K."/>
            <person name="Iwamatsu A."/>
            <person name="Kishida S."/>
            <person name="Kikuchi A."/>
        </authorList>
    </citation>
    <scope>FUNCTION</scope>
</reference>
<reference key="11">
    <citation type="journal article" date="2003" name="J. Biol. Chem.">
        <title>Ral GTPases regulate exocyst assembly through dual subunit interactions.</title>
        <authorList>
            <person name="Moskalenko S."/>
            <person name="Tong C."/>
            <person name="Rosse C."/>
            <person name="Mirey G."/>
            <person name="Formstecher E."/>
            <person name="Daviet L."/>
            <person name="Camonis J."/>
            <person name="White M.A."/>
        </authorList>
    </citation>
    <scope>INTERACTION WITH EXOC8</scope>
</reference>
<reference key="12">
    <citation type="journal article" date="2007" name="Mol. Cell. Biol.">
        <title>Geranylgeranyltransferase I inhibitors target RalB to inhibit anchorage-dependent growth and induce apoptosis and RalA to inhibit anchorage-independent growth.</title>
        <authorList>
            <person name="Falsetti S.C."/>
            <person name="Wang D.A."/>
            <person name="Peng H."/>
            <person name="Carrico D."/>
            <person name="Cox A.D."/>
            <person name="Der C.J."/>
            <person name="Hamilton A.D."/>
            <person name="Sebti S.M."/>
        </authorList>
    </citation>
    <scope>FUNCTION</scope>
    <scope>SUBCELLULAR LOCATION</scope>
    <scope>ISOPRENYLATION AT CYS-203</scope>
    <scope>MUTAGENESIS OF CYS-203 AND LEU-206</scope>
</reference>
<reference key="13">
    <citation type="journal article" date="2008" name="EMBO J.">
        <title>Distinct roles of RalA and RalB in the progression of cytokinesis are supported by distinct RalGEFs.</title>
        <authorList>
            <person name="Cascone I."/>
            <person name="Selimoglu R."/>
            <person name="Ozdemir C."/>
            <person name="Del Nery E."/>
            <person name="Yeaman C."/>
            <person name="White M."/>
            <person name="Camonis J."/>
        </authorList>
    </citation>
    <scope>FUNCTION</scope>
    <scope>INTERACTION WITH EXOC2 AND EXOC8</scope>
    <scope>SUBCELLULAR LOCATION</scope>
    <scope>MUTAGENESIS OF 1-MET--SER-11; GLY-23; GLU-38; ALA-48 AND ASP-49</scope>
</reference>
<reference key="14">
    <citation type="journal article" date="2011" name="BMC Syst. Biol.">
        <title>Initial characterization of the human central proteome.</title>
        <authorList>
            <person name="Burkard T.R."/>
            <person name="Planyavsky M."/>
            <person name="Kaupe I."/>
            <person name="Breitwieser F.P."/>
            <person name="Buerckstuemmer T."/>
            <person name="Bennett K.L."/>
            <person name="Superti-Furga G."/>
            <person name="Colinge J."/>
        </authorList>
    </citation>
    <scope>IDENTIFICATION BY MASS SPECTROMETRY [LARGE SCALE ANALYSIS]</scope>
</reference>
<reference key="15">
    <citation type="journal article" date="2015" name="Proteomics">
        <title>N-terminome analysis of the human mitochondrial proteome.</title>
        <authorList>
            <person name="Vaca Jacome A.S."/>
            <person name="Rabilloud T."/>
            <person name="Schaeffer-Reiss C."/>
            <person name="Rompais M."/>
            <person name="Ayoub D."/>
            <person name="Lane L."/>
            <person name="Bairoch A."/>
            <person name="Van Dorsselaer A."/>
            <person name="Carapito C."/>
        </authorList>
    </citation>
    <scope>IDENTIFICATION BY MASS SPECTROMETRY [LARGE SCALE ANALYSIS]</scope>
</reference>
<reference key="16">
    <citation type="journal article" date="2009" name="Biochemistry">
        <title>Solution structure and dynamics of the small GTPase RalB in its active conformation: significance for effector protein binding.</title>
        <authorList>
            <person name="Fenwick R.B."/>
            <person name="Prasannan S."/>
            <person name="Campbell L.J."/>
            <person name="Nietlispach D."/>
            <person name="Evetts K.A."/>
            <person name="Camonis J."/>
            <person name="Mott H.R."/>
            <person name="Owen D."/>
        </authorList>
    </citation>
    <scope>STRUCTURE BY NMR OF 12-185 IN COMPLEX WITH GTP ANALOG</scope>
    <scope>INTERACTION WITH EXOC2</scope>
    <scope>MUTAGENESIS OF THR-46 AND GLN-72</scope>
</reference>
<reference key="17">
    <citation type="journal article" date="2010" name="Structure">
        <title>The RalB-RLIP76 complex reveals a novel mode of ral-effector interaction.</title>
        <authorList>
            <person name="Fenwick R.B."/>
            <person name="Campbell L.J."/>
            <person name="Rajasekar K."/>
            <person name="Prasannan S."/>
            <person name="Nietlispach D."/>
            <person name="Camonis J."/>
            <person name="Owen D."/>
            <person name="Mott H.R."/>
        </authorList>
    </citation>
    <scope>STRUCTURE BY NMR OF 8-185 IN COMPLEX WITH RALBP1</scope>
    <scope>INTERACTION WITH RALBP1</scope>
</reference>
<keyword id="KW-0002">3D-structure</keyword>
<keyword id="KW-0025">Alternative splicing</keyword>
<keyword id="KW-0053">Apoptosis</keyword>
<keyword id="KW-0131">Cell cycle</keyword>
<keyword id="KW-0132">Cell division</keyword>
<keyword id="KW-1003">Cell membrane</keyword>
<keyword id="KW-0342">GTP-binding</keyword>
<keyword id="KW-0378">Hydrolase</keyword>
<keyword id="KW-0449">Lipoprotein</keyword>
<keyword id="KW-0472">Membrane</keyword>
<keyword id="KW-0488">Methylation</keyword>
<keyword id="KW-0547">Nucleotide-binding</keyword>
<keyword id="KW-0636">Prenylation</keyword>
<keyword id="KW-1267">Proteomics identification</keyword>
<keyword id="KW-1185">Reference proteome</keyword>
<accession>P11234</accession>
<accession>B4E040</accession>
<accession>Q53T32</accession>
<accession>Q6ZS74</accession>
<name>RALB_HUMAN</name>
<feature type="chain" id="PRO_0000082698" description="Ras-related protein Ral-B">
    <location>
        <begin position="1"/>
        <end position="203"/>
    </location>
</feature>
<feature type="propeptide" id="PRO_0000281349" description="Removed in mature form" evidence="1">
    <location>
        <begin position="204"/>
        <end position="206"/>
    </location>
</feature>
<feature type="region of interest" description="Disordered" evidence="3">
    <location>
        <begin position="180"/>
        <end position="206"/>
    </location>
</feature>
<feature type="short sequence motif" description="Effector region">
    <location>
        <begin position="43"/>
        <end position="51"/>
    </location>
</feature>
<feature type="compositionally biased region" description="Basic and acidic residues" evidence="3">
    <location>
        <begin position="180"/>
        <end position="189"/>
    </location>
</feature>
<feature type="binding site">
    <location>
        <begin position="21"/>
        <end position="29"/>
    </location>
    <ligand>
        <name>GTP</name>
        <dbReference type="ChEBI" id="CHEBI:37565"/>
    </ligand>
</feature>
<feature type="binding site">
    <location>
        <begin position="68"/>
        <end position="72"/>
    </location>
    <ligand>
        <name>GTP</name>
        <dbReference type="ChEBI" id="CHEBI:37565"/>
    </ligand>
</feature>
<feature type="binding site">
    <location>
        <begin position="128"/>
        <end position="131"/>
    </location>
    <ligand>
        <name>GTP</name>
        <dbReference type="ChEBI" id="CHEBI:37565"/>
    </ligand>
</feature>
<feature type="binding site">
    <location>
        <begin position="158"/>
        <end position="160"/>
    </location>
    <ligand>
        <name>GTP</name>
        <dbReference type="ChEBI" id="CHEBI:37565"/>
    </ligand>
</feature>
<feature type="modified residue" description="Cysteine methyl ester" evidence="1">
    <location>
        <position position="203"/>
    </location>
</feature>
<feature type="lipid moiety-binding region" description="S-geranylgeranyl cysteine" evidence="6">
    <location>
        <position position="203"/>
    </location>
</feature>
<feature type="splice variant" id="VSP_055843" description="In isoform 2." evidence="11">
    <original>M</original>
    <variation>MKQRQSALQWVICVSQPQKTSEM</variation>
    <location>
        <position position="1"/>
    </location>
</feature>
<feature type="splice variant" id="VSP_055844" description="In isoform 3." evidence="11">
    <original>YD</original>
    <variation>NVSKSLAYDKKKYTANKKVEGIL</variation>
    <location>
        <begin position="36"/>
        <end position="37"/>
    </location>
</feature>
<feature type="mutagenesis site" description="No effect on cytokinesis. Impaired cytokinesis, as shown by increased number of binucleate cells; when associated with V-23." evidence="7">
    <location>
        <begin position="1"/>
        <end position="11"/>
    </location>
</feature>
<feature type="mutagenesis site" description="Impaired cytokinesis, as shown by increased number of binucleate cells. Impaired cytokinesis; when associated with 1-M--S-11 or N-49. No effect on cytokinesis; when associated with R-38, W-48 or E-49. No effect on interaction with EXOC2 and EXOC8. Decreased interaction with EXOC2 and EXOC8; when associated with R-38 or W-48." evidence="7">
    <original>G</original>
    <variation>V</variation>
    <location>
        <position position="23"/>
    </location>
</feature>
<feature type="mutagenesis site" description="No effect on cytokinesis. No effect on cytokinesis; when associated with V-23. Decreased interaction with EXOC2 and EXOC8; when associated with V-23." evidence="7">
    <original>E</original>
    <variation>R</variation>
    <location>
        <position position="38"/>
    </location>
</feature>
<feature type="mutagenesis site" description="Reduces the binding affinity to EXOC2 effector." evidence="8">
    <original>T</original>
    <variation>A</variation>
    <location>
        <position position="46"/>
    </location>
</feature>
<feature type="mutagenesis site" description="Reduces the binding affinity to EXOC2 effector." evidence="8">
    <original>T</original>
    <variation>S</variation>
    <location>
        <position position="46"/>
    </location>
</feature>
<feature type="mutagenesis site" description="Impaired abscission, the last step of cytokinesis, as shown by the accumulation of bridged cells. No effect on cytokinesis; when associated with V-23. Decreased interaction with EXOC2 and EXOC8; when associated with V-23." evidence="7">
    <original>A</original>
    <variation>W</variation>
    <location>
        <position position="48"/>
    </location>
</feature>
<feature type="mutagenesis site" description="Impaired abscission, the last step of cytokinesis. No effect on cytokinesis; when associated with V-23." evidence="7">
    <original>D</original>
    <variation>E</variation>
    <location>
        <position position="49"/>
    </location>
</feature>
<feature type="mutagenesis site" description="No effect on cytokinesis. Impaired cytokinesis, as shown by increased number of binucleate cells; when associated with V-23." evidence="7">
    <original>D</original>
    <variation>N</variation>
    <location>
        <position position="49"/>
    </location>
</feature>
<feature type="mutagenesis site" description="Loss of GTPase activity." evidence="8">
    <original>Q</original>
    <variation>L</variation>
    <location>
        <position position="72"/>
    </location>
</feature>
<feature type="mutagenesis site" description="Loss of geranylgeranylation and membrane localization." evidence="6">
    <original>C</original>
    <variation>S</variation>
    <location>
        <position position="203"/>
    </location>
</feature>
<feature type="mutagenesis site" description="Converts geranyl-geranylation to farnesylation. No effect on membrane localization. Confers resistance to GGTI-induced pancreatic cancer cell apoptosis, but not to GGTI-dependent inhibition of anchorage-independent proliferation." evidence="6">
    <original>L</original>
    <variation>S</variation>
    <location>
        <position position="206"/>
    </location>
</feature>
<feature type="turn" evidence="13">
    <location>
        <begin position="10"/>
        <end position="12"/>
    </location>
</feature>
<feature type="strand" evidence="14">
    <location>
        <begin position="14"/>
        <end position="21"/>
    </location>
</feature>
<feature type="helix" evidence="14">
    <location>
        <begin position="27"/>
        <end position="36"/>
    </location>
</feature>
<feature type="strand" evidence="14">
    <location>
        <begin position="47"/>
        <end position="57"/>
    </location>
</feature>
<feature type="strand" evidence="14">
    <location>
        <begin position="60"/>
        <end position="69"/>
    </location>
</feature>
<feature type="helix" evidence="14">
    <location>
        <begin position="76"/>
        <end position="85"/>
    </location>
</feature>
<feature type="strand" evidence="14">
    <location>
        <begin position="87"/>
        <end position="94"/>
    </location>
</feature>
<feature type="helix" evidence="14">
    <location>
        <begin position="98"/>
        <end position="114"/>
    </location>
</feature>
<feature type="turn" evidence="14">
    <location>
        <begin position="115"/>
        <end position="117"/>
    </location>
</feature>
<feature type="strand" evidence="14">
    <location>
        <begin position="123"/>
        <end position="128"/>
    </location>
</feature>
<feature type="helix" evidence="14">
    <location>
        <begin position="130"/>
        <end position="135"/>
    </location>
</feature>
<feature type="helix" evidence="14">
    <location>
        <begin position="140"/>
        <end position="150"/>
    </location>
</feature>
<feature type="strand" evidence="14">
    <location>
        <begin position="153"/>
        <end position="156"/>
    </location>
</feature>
<feature type="turn" evidence="14">
    <location>
        <begin position="159"/>
        <end position="161"/>
    </location>
</feature>
<feature type="helix" evidence="14">
    <location>
        <begin position="165"/>
        <end position="182"/>
    </location>
</feature>
<dbReference type="EC" id="3.6.5.2" evidence="12"/>
<dbReference type="EMBL" id="X15015">
    <property type="protein sequence ID" value="CAA33119.1"/>
    <property type="molecule type" value="mRNA"/>
</dbReference>
<dbReference type="EMBL" id="M35416">
    <property type="protein sequence ID" value="AAA60250.1"/>
    <property type="molecule type" value="mRNA"/>
</dbReference>
<dbReference type="EMBL" id="AF493911">
    <property type="protein sequence ID" value="AAM12625.1"/>
    <property type="molecule type" value="mRNA"/>
</dbReference>
<dbReference type="EMBL" id="BT006953">
    <property type="protein sequence ID" value="AAP35599.1"/>
    <property type="molecule type" value="mRNA"/>
</dbReference>
<dbReference type="EMBL" id="AK127675">
    <property type="protein sequence ID" value="BAC87080.1"/>
    <property type="molecule type" value="mRNA"/>
</dbReference>
<dbReference type="EMBL" id="AK303214">
    <property type="protein sequence ID" value="BAG64302.1"/>
    <property type="molecule type" value="mRNA"/>
</dbReference>
<dbReference type="EMBL" id="AK312453">
    <property type="protein sequence ID" value="BAG35360.1"/>
    <property type="molecule type" value="mRNA"/>
</dbReference>
<dbReference type="EMBL" id="AC012363">
    <property type="protein sequence ID" value="AAY14800.1"/>
    <property type="molecule type" value="Genomic_DNA"/>
</dbReference>
<dbReference type="EMBL" id="CH471103">
    <property type="protein sequence ID" value="EAW95240.1"/>
    <property type="molecule type" value="Genomic_DNA"/>
</dbReference>
<dbReference type="EMBL" id="CH471103">
    <property type="protein sequence ID" value="EAW95242.1"/>
    <property type="molecule type" value="Genomic_DNA"/>
</dbReference>
<dbReference type="EMBL" id="BC018163">
    <property type="protein sequence ID" value="AAH18163.1"/>
    <property type="molecule type" value="mRNA"/>
</dbReference>
<dbReference type="CCDS" id="CCDS2131.1">
    <molecule id="P11234-1"/>
</dbReference>
<dbReference type="PIR" id="S04597">
    <property type="entry name" value="TVHUAB"/>
</dbReference>
<dbReference type="RefSeq" id="NP_001356329.1">
    <molecule id="P11234-1"/>
    <property type="nucleotide sequence ID" value="NM_001369400.1"/>
</dbReference>
<dbReference type="RefSeq" id="NP_002872.1">
    <molecule id="P11234-1"/>
    <property type="nucleotide sequence ID" value="NM_002881.3"/>
</dbReference>
<dbReference type="RefSeq" id="XP_005263781.1">
    <property type="nucleotide sequence ID" value="XM_005263724.1"/>
</dbReference>
<dbReference type="RefSeq" id="XP_005263784.1">
    <property type="nucleotide sequence ID" value="XM_005263727.1"/>
</dbReference>
<dbReference type="RefSeq" id="XP_005263785.1">
    <molecule id="P11234-1"/>
    <property type="nucleotide sequence ID" value="XM_005263728.2"/>
</dbReference>
<dbReference type="RefSeq" id="XP_005263786.1">
    <property type="nucleotide sequence ID" value="XM_005263729.2"/>
</dbReference>
<dbReference type="RefSeq" id="XP_016860111.1">
    <property type="nucleotide sequence ID" value="XM_017004622.1"/>
</dbReference>
<dbReference type="RefSeq" id="XP_047301315.1">
    <molecule id="P11234-2"/>
    <property type="nucleotide sequence ID" value="XM_047445359.1"/>
</dbReference>
<dbReference type="RefSeq" id="XP_047301318.1">
    <molecule id="P11234-1"/>
    <property type="nucleotide sequence ID" value="XM_047445362.1"/>
</dbReference>
<dbReference type="RefSeq" id="XP_047301319.1">
    <molecule id="P11234-1"/>
    <property type="nucleotide sequence ID" value="XM_047445363.1"/>
</dbReference>
<dbReference type="RefSeq" id="XP_047301320.1">
    <molecule id="P11234-1"/>
    <property type="nucleotide sequence ID" value="XM_047445364.1"/>
</dbReference>
<dbReference type="RefSeq" id="XP_054199226.1">
    <molecule id="P11234-2"/>
    <property type="nucleotide sequence ID" value="XM_054343251.1"/>
</dbReference>
<dbReference type="RefSeq" id="XP_054199229.1">
    <molecule id="P11234-1"/>
    <property type="nucleotide sequence ID" value="XM_054343254.1"/>
</dbReference>
<dbReference type="RefSeq" id="XP_054199230.1">
    <molecule id="P11234-1"/>
    <property type="nucleotide sequence ID" value="XM_054343255.1"/>
</dbReference>
<dbReference type="RefSeq" id="XP_054199231.1">
    <molecule id="P11234-1"/>
    <property type="nucleotide sequence ID" value="XM_054343256.1"/>
</dbReference>
<dbReference type="PDB" id="2KE5">
    <property type="method" value="NMR"/>
    <property type="chains" value="A=12-185"/>
</dbReference>
<dbReference type="PDB" id="2KWI">
    <property type="method" value="NMR"/>
    <property type="chains" value="A=8-185"/>
</dbReference>
<dbReference type="PDB" id="6ZQT">
    <property type="method" value="X-ray"/>
    <property type="resolution" value="1.51 A"/>
    <property type="chains" value="A/B=1-185"/>
</dbReference>
<dbReference type="PDB" id="6ZRN">
    <property type="method" value="X-ray"/>
    <property type="resolution" value="1.48 A"/>
    <property type="chains" value="A/B=1-185"/>
</dbReference>
<dbReference type="PDBsum" id="2KE5"/>
<dbReference type="PDBsum" id="2KWI"/>
<dbReference type="PDBsum" id="6ZQT"/>
<dbReference type="PDBsum" id="6ZRN"/>
<dbReference type="BMRB" id="P11234"/>
<dbReference type="SMR" id="P11234"/>
<dbReference type="BioGRID" id="111835">
    <property type="interactions" value="85"/>
</dbReference>
<dbReference type="FunCoup" id="P11234">
    <property type="interactions" value="1255"/>
</dbReference>
<dbReference type="IntAct" id="P11234">
    <property type="interactions" value="56"/>
</dbReference>
<dbReference type="MINT" id="P11234"/>
<dbReference type="STRING" id="9606.ENSP00000272519"/>
<dbReference type="ChEMBL" id="CHEMBL3879851"/>
<dbReference type="iPTMnet" id="P11234"/>
<dbReference type="PhosphoSitePlus" id="P11234"/>
<dbReference type="SwissPalm" id="P11234"/>
<dbReference type="BioMuta" id="RALB"/>
<dbReference type="DMDM" id="131835"/>
<dbReference type="jPOST" id="P11234"/>
<dbReference type="MassIVE" id="P11234"/>
<dbReference type="PaxDb" id="9606-ENSP00000272519"/>
<dbReference type="PeptideAtlas" id="P11234"/>
<dbReference type="ProteomicsDB" id="52727">
    <molecule id="P11234-1"/>
</dbReference>
<dbReference type="ProteomicsDB" id="5648"/>
<dbReference type="ProteomicsDB" id="68195"/>
<dbReference type="Pumba" id="P11234"/>
<dbReference type="Antibodypedia" id="33389">
    <property type="antibodies" value="374 antibodies from 36 providers"/>
</dbReference>
<dbReference type="DNASU" id="5899"/>
<dbReference type="Ensembl" id="ENST00000272519.10">
    <molecule id="P11234-1"/>
    <property type="protein sequence ID" value="ENSP00000272519.4"/>
    <property type="gene ID" value="ENSG00000144118.14"/>
</dbReference>
<dbReference type="Ensembl" id="ENST00000420510.5">
    <molecule id="P11234-1"/>
    <property type="protein sequence ID" value="ENSP00000414224.1"/>
    <property type="gene ID" value="ENSG00000144118.14"/>
</dbReference>
<dbReference type="GeneID" id="5899"/>
<dbReference type="KEGG" id="hsa:5899"/>
<dbReference type="MANE-Select" id="ENST00000272519.10">
    <property type="protein sequence ID" value="ENSP00000272519.4"/>
    <property type="RefSeq nucleotide sequence ID" value="NM_002881.3"/>
    <property type="RefSeq protein sequence ID" value="NP_002872.1"/>
</dbReference>
<dbReference type="UCSC" id="uc002tmk.4">
    <molecule id="P11234-1"/>
    <property type="organism name" value="human"/>
</dbReference>
<dbReference type="AGR" id="HGNC:9840"/>
<dbReference type="CTD" id="5899"/>
<dbReference type="DisGeNET" id="5899"/>
<dbReference type="GeneCards" id="RALB"/>
<dbReference type="HGNC" id="HGNC:9840">
    <property type="gene designation" value="RALB"/>
</dbReference>
<dbReference type="HPA" id="ENSG00000144118">
    <property type="expression patterns" value="Tissue enriched (parathyroid)"/>
</dbReference>
<dbReference type="MIM" id="179551">
    <property type="type" value="gene"/>
</dbReference>
<dbReference type="neXtProt" id="NX_P11234"/>
<dbReference type="OpenTargets" id="ENSG00000144118"/>
<dbReference type="PharmGKB" id="PA34198"/>
<dbReference type="VEuPathDB" id="HostDB:ENSG00000144118"/>
<dbReference type="eggNOG" id="KOG0395">
    <property type="taxonomic scope" value="Eukaryota"/>
</dbReference>
<dbReference type="GeneTree" id="ENSGT00940000155984"/>
<dbReference type="InParanoid" id="P11234"/>
<dbReference type="OMA" id="DDTIPFI"/>
<dbReference type="OrthoDB" id="5976022at2759"/>
<dbReference type="PAN-GO" id="P11234">
    <property type="GO annotations" value="5 GO annotations based on evolutionary models"/>
</dbReference>
<dbReference type="PhylomeDB" id="P11234"/>
<dbReference type="TreeFam" id="TF312796"/>
<dbReference type="PathwayCommons" id="P11234"/>
<dbReference type="Reactome" id="R-HSA-171007">
    <property type="pathway name" value="p38MAPK events"/>
</dbReference>
<dbReference type="SignaLink" id="P11234"/>
<dbReference type="SIGNOR" id="P11234"/>
<dbReference type="BioGRID-ORCS" id="5899">
    <property type="hits" value="16 hits in 1170 CRISPR screens"/>
</dbReference>
<dbReference type="ChiTaRS" id="RALB">
    <property type="organism name" value="human"/>
</dbReference>
<dbReference type="EvolutionaryTrace" id="P11234"/>
<dbReference type="GeneWiki" id="RALB"/>
<dbReference type="GenomeRNAi" id="5899"/>
<dbReference type="Pharos" id="P11234">
    <property type="development level" value="Tbio"/>
</dbReference>
<dbReference type="PRO" id="PR:P11234"/>
<dbReference type="Proteomes" id="UP000005640">
    <property type="component" value="Chromosome 2"/>
</dbReference>
<dbReference type="RNAct" id="P11234">
    <property type="molecule type" value="protein"/>
</dbReference>
<dbReference type="Bgee" id="ENSG00000144118">
    <property type="expression patterns" value="Expressed in monocyte and 213 other cell types or tissues"/>
</dbReference>
<dbReference type="ExpressionAtlas" id="P11234">
    <property type="expression patterns" value="baseline and differential"/>
</dbReference>
<dbReference type="GO" id="GO:0070062">
    <property type="term" value="C:extracellular exosome"/>
    <property type="evidence" value="ECO:0007005"/>
    <property type="project" value="UniProtKB"/>
</dbReference>
<dbReference type="GO" id="GO:0030496">
    <property type="term" value="C:midbody"/>
    <property type="evidence" value="ECO:0000314"/>
    <property type="project" value="UniProtKB"/>
</dbReference>
<dbReference type="GO" id="GO:0005886">
    <property type="term" value="C:plasma membrane"/>
    <property type="evidence" value="ECO:0000314"/>
    <property type="project" value="UniProtKB"/>
</dbReference>
<dbReference type="GO" id="GO:0051117">
    <property type="term" value="F:ATPase binding"/>
    <property type="evidence" value="ECO:0000353"/>
    <property type="project" value="UniProtKB"/>
</dbReference>
<dbReference type="GO" id="GO:0003925">
    <property type="term" value="F:G protein activity"/>
    <property type="evidence" value="ECO:0007669"/>
    <property type="project" value="UniProtKB-EC"/>
</dbReference>
<dbReference type="GO" id="GO:0019003">
    <property type="term" value="F:GDP binding"/>
    <property type="evidence" value="ECO:0000314"/>
    <property type="project" value="UniProtKB"/>
</dbReference>
<dbReference type="GO" id="GO:0005525">
    <property type="term" value="F:GTP binding"/>
    <property type="evidence" value="ECO:0000314"/>
    <property type="project" value="UniProtKB"/>
</dbReference>
<dbReference type="GO" id="GO:0003924">
    <property type="term" value="F:GTPase activity"/>
    <property type="evidence" value="ECO:0000314"/>
    <property type="project" value="UniProtKB"/>
</dbReference>
<dbReference type="GO" id="GO:0031625">
    <property type="term" value="F:ubiquitin protein ligase binding"/>
    <property type="evidence" value="ECO:0000353"/>
    <property type="project" value="UniProtKB"/>
</dbReference>
<dbReference type="GO" id="GO:0006915">
    <property type="term" value="P:apoptotic process"/>
    <property type="evidence" value="ECO:0007669"/>
    <property type="project" value="UniProtKB-KW"/>
</dbReference>
<dbReference type="GO" id="GO:0051301">
    <property type="term" value="P:cell division"/>
    <property type="evidence" value="ECO:0007669"/>
    <property type="project" value="UniProtKB-KW"/>
</dbReference>
<dbReference type="GO" id="GO:0071360">
    <property type="term" value="P:cellular response to exogenous dsRNA"/>
    <property type="evidence" value="ECO:0000315"/>
    <property type="project" value="UniProtKB"/>
</dbReference>
<dbReference type="GO" id="GO:0009267">
    <property type="term" value="P:cellular response to starvation"/>
    <property type="evidence" value="ECO:0000314"/>
    <property type="project" value="UniProtKB"/>
</dbReference>
<dbReference type="GO" id="GO:0032091">
    <property type="term" value="P:negative regulation of protein binding"/>
    <property type="evidence" value="ECO:0000315"/>
    <property type="project" value="UniProtKB"/>
</dbReference>
<dbReference type="GO" id="GO:2000786">
    <property type="term" value="P:positive regulation of autophagosome assembly"/>
    <property type="evidence" value="ECO:0000315"/>
    <property type="project" value="UniProtKB"/>
</dbReference>
<dbReference type="GO" id="GO:0045742">
    <property type="term" value="P:positive regulation of epidermal growth factor receptor signaling pathway"/>
    <property type="evidence" value="ECO:0000316"/>
    <property type="project" value="FlyBase"/>
</dbReference>
<dbReference type="GO" id="GO:0032092">
    <property type="term" value="P:positive regulation of protein binding"/>
    <property type="evidence" value="ECO:0000315"/>
    <property type="project" value="UniProtKB"/>
</dbReference>
<dbReference type="GO" id="GO:0001934">
    <property type="term" value="P:positive regulation of protein phosphorylation"/>
    <property type="evidence" value="ECO:0000315"/>
    <property type="project" value="UniProtKB"/>
</dbReference>
<dbReference type="GO" id="GO:0071902">
    <property type="term" value="P:positive regulation of protein serine/threonine kinase activity"/>
    <property type="evidence" value="ECO:0000315"/>
    <property type="project" value="UniProtKB"/>
</dbReference>
<dbReference type="GO" id="GO:0007265">
    <property type="term" value="P:Ras protein signal transduction"/>
    <property type="evidence" value="ECO:0000318"/>
    <property type="project" value="GO_Central"/>
</dbReference>
<dbReference type="GO" id="GO:0031623">
    <property type="term" value="P:receptor internalization"/>
    <property type="evidence" value="ECO:0000316"/>
    <property type="project" value="FlyBase"/>
</dbReference>
<dbReference type="GO" id="GO:0001928">
    <property type="term" value="P:regulation of exocyst assembly"/>
    <property type="evidence" value="ECO:0000250"/>
    <property type="project" value="UniProtKB"/>
</dbReference>
<dbReference type="GO" id="GO:0060178">
    <property type="term" value="P:regulation of exocyst localization"/>
    <property type="evidence" value="ECO:0000250"/>
    <property type="project" value="UniProtKB"/>
</dbReference>
<dbReference type="GO" id="GO:0007165">
    <property type="term" value="P:signal transduction"/>
    <property type="evidence" value="ECO:0000304"/>
    <property type="project" value="ProtInc"/>
</dbReference>
<dbReference type="CDD" id="cd04139">
    <property type="entry name" value="RalA_RalB"/>
    <property type="match status" value="1"/>
</dbReference>
<dbReference type="FunFam" id="3.40.50.300:FF:000203">
    <property type="entry name" value="Putative ras-related protein ral-a"/>
    <property type="match status" value="1"/>
</dbReference>
<dbReference type="Gene3D" id="3.40.50.300">
    <property type="entry name" value="P-loop containing nucleotide triphosphate hydrolases"/>
    <property type="match status" value="1"/>
</dbReference>
<dbReference type="InterPro" id="IPR027417">
    <property type="entry name" value="P-loop_NTPase"/>
</dbReference>
<dbReference type="InterPro" id="IPR005225">
    <property type="entry name" value="Small_GTP-bd"/>
</dbReference>
<dbReference type="InterPro" id="IPR001806">
    <property type="entry name" value="Small_GTPase"/>
</dbReference>
<dbReference type="InterPro" id="IPR020849">
    <property type="entry name" value="Small_GTPase_Ras-type"/>
</dbReference>
<dbReference type="NCBIfam" id="TIGR00231">
    <property type="entry name" value="small_GTP"/>
    <property type="match status" value="1"/>
</dbReference>
<dbReference type="PANTHER" id="PTHR24070">
    <property type="entry name" value="RAS, DI-RAS, AND RHEB FAMILY MEMBERS OF SMALL GTPASE SUPERFAMILY"/>
    <property type="match status" value="1"/>
</dbReference>
<dbReference type="Pfam" id="PF00071">
    <property type="entry name" value="Ras"/>
    <property type="match status" value="1"/>
</dbReference>
<dbReference type="PRINTS" id="PR00449">
    <property type="entry name" value="RASTRNSFRMNG"/>
</dbReference>
<dbReference type="SMART" id="SM00175">
    <property type="entry name" value="RAB"/>
    <property type="match status" value="1"/>
</dbReference>
<dbReference type="SMART" id="SM00176">
    <property type="entry name" value="RAN"/>
    <property type="match status" value="1"/>
</dbReference>
<dbReference type="SMART" id="SM00173">
    <property type="entry name" value="RAS"/>
    <property type="match status" value="1"/>
</dbReference>
<dbReference type="SMART" id="SM00174">
    <property type="entry name" value="RHO"/>
    <property type="match status" value="1"/>
</dbReference>
<dbReference type="SUPFAM" id="SSF52540">
    <property type="entry name" value="P-loop containing nucleoside triphosphate hydrolases"/>
    <property type="match status" value="1"/>
</dbReference>
<dbReference type="PROSITE" id="PS51421">
    <property type="entry name" value="RAS"/>
    <property type="match status" value="1"/>
</dbReference>
<protein>
    <recommendedName>
        <fullName>Ras-related protein Ral-B</fullName>
        <ecNumber evidence="12">3.6.5.2</ecNumber>
    </recommendedName>
</protein>
<organism>
    <name type="scientific">Homo sapiens</name>
    <name type="common">Human</name>
    <dbReference type="NCBI Taxonomy" id="9606"/>
    <lineage>
        <taxon>Eukaryota</taxon>
        <taxon>Metazoa</taxon>
        <taxon>Chordata</taxon>
        <taxon>Craniata</taxon>
        <taxon>Vertebrata</taxon>
        <taxon>Euteleostomi</taxon>
        <taxon>Mammalia</taxon>
        <taxon>Eutheria</taxon>
        <taxon>Euarchontoglires</taxon>
        <taxon>Primates</taxon>
        <taxon>Haplorrhini</taxon>
        <taxon>Catarrhini</taxon>
        <taxon>Hominidae</taxon>
        <taxon>Homo</taxon>
    </lineage>
</organism>
<evidence type="ECO:0000250" key="1"/>
<evidence type="ECO:0000250" key="2">
    <source>
        <dbReference type="UniProtKB" id="P36860"/>
    </source>
</evidence>
<evidence type="ECO:0000256" key="3">
    <source>
        <dbReference type="SAM" id="MobiDB-lite"/>
    </source>
</evidence>
<evidence type="ECO:0000269" key="4">
    <source>
    </source>
</evidence>
<evidence type="ECO:0000269" key="5">
    <source>
    </source>
</evidence>
<evidence type="ECO:0000269" key="6">
    <source>
    </source>
</evidence>
<evidence type="ECO:0000269" key="7">
    <source>
    </source>
</evidence>
<evidence type="ECO:0000269" key="8">
    <source>
    </source>
</evidence>
<evidence type="ECO:0000269" key="9">
    <source>
    </source>
</evidence>
<evidence type="ECO:0000269" key="10">
    <source>
    </source>
</evidence>
<evidence type="ECO:0000303" key="11">
    <source>
    </source>
</evidence>
<evidence type="ECO:0000305" key="12"/>
<evidence type="ECO:0007829" key="13">
    <source>
        <dbReference type="PDB" id="2KWI"/>
    </source>
</evidence>
<evidence type="ECO:0007829" key="14">
    <source>
        <dbReference type="PDB" id="6ZRN"/>
    </source>
</evidence>